<organism>
    <name type="scientific">Candida albicans (strain SC5314 / ATCC MYA-2876)</name>
    <name type="common">Yeast</name>
    <dbReference type="NCBI Taxonomy" id="237561"/>
    <lineage>
        <taxon>Eukaryota</taxon>
        <taxon>Fungi</taxon>
        <taxon>Dikarya</taxon>
        <taxon>Ascomycota</taxon>
        <taxon>Saccharomycotina</taxon>
        <taxon>Pichiomycetes</taxon>
        <taxon>Debaryomycetaceae</taxon>
        <taxon>Candida/Lodderomyces clade</taxon>
        <taxon>Candida</taxon>
    </lineage>
</organism>
<comment type="function">
    <text evidence="1">Acts as an inhibitor of cap-dependent translation. Competes with eIF4G1 and EAP1 for binding to eIF4E and interferes with the formation of the eIF4F complex, inhibiting translation and stabilizing mRNA (By similarity).</text>
</comment>
<comment type="subcellular location">
    <subcellularLocation>
        <location evidence="1">Cytoplasm</location>
    </subcellularLocation>
</comment>
<comment type="similarity">
    <text evidence="3">Belongs to the CAF20 family.</text>
</comment>
<dbReference type="EMBL" id="CP017623">
    <property type="protein sequence ID" value="AOW26569.1"/>
    <property type="molecule type" value="Genomic_DNA"/>
</dbReference>
<dbReference type="RefSeq" id="XP_723482.1">
    <property type="nucleotide sequence ID" value="XM_718389.2"/>
</dbReference>
<dbReference type="SMR" id="Q5AQ12"/>
<dbReference type="FunCoup" id="Q5AQ12">
    <property type="interactions" value="378"/>
</dbReference>
<dbReference type="STRING" id="237561.Q5AQ12"/>
<dbReference type="EnsemblFungi" id="C1_09350W_A-T">
    <property type="protein sequence ID" value="C1_09350W_A-T-p1"/>
    <property type="gene ID" value="C1_09350W_A"/>
</dbReference>
<dbReference type="GeneID" id="3634805"/>
<dbReference type="KEGG" id="cal:CAALFM_C109350WA"/>
<dbReference type="CGD" id="CAL0000199949">
    <property type="gene designation" value="orf19.4796"/>
</dbReference>
<dbReference type="VEuPathDB" id="FungiDB:C1_09350W_A"/>
<dbReference type="eggNOG" id="ENOG502S2E7">
    <property type="taxonomic scope" value="Eukaryota"/>
</dbReference>
<dbReference type="HOGENOM" id="CLU_128343_0_0_1"/>
<dbReference type="InParanoid" id="Q5AQ12"/>
<dbReference type="OMA" id="GRPKVKH"/>
<dbReference type="OrthoDB" id="3995390at2759"/>
<dbReference type="Proteomes" id="UP000000559">
    <property type="component" value="Chromosome 1"/>
</dbReference>
<dbReference type="GO" id="GO:0005737">
    <property type="term" value="C:cytoplasm"/>
    <property type="evidence" value="ECO:0007669"/>
    <property type="project" value="UniProtKB-SubCell"/>
</dbReference>
<dbReference type="GO" id="GO:0008190">
    <property type="term" value="F:eukaryotic initiation factor 4E binding"/>
    <property type="evidence" value="ECO:0007669"/>
    <property type="project" value="InterPro"/>
</dbReference>
<dbReference type="GO" id="GO:0003743">
    <property type="term" value="F:translation initiation factor activity"/>
    <property type="evidence" value="ECO:0007669"/>
    <property type="project" value="UniProtKB-KW"/>
</dbReference>
<dbReference type="GO" id="GO:0017148">
    <property type="term" value="P:negative regulation of translation"/>
    <property type="evidence" value="ECO:0007669"/>
    <property type="project" value="UniProtKB-KW"/>
</dbReference>
<dbReference type="InterPro" id="IPR031456">
    <property type="entry name" value="Caf20"/>
</dbReference>
<dbReference type="Pfam" id="PF17052">
    <property type="entry name" value="CAF20"/>
    <property type="match status" value="1"/>
</dbReference>
<proteinExistence type="inferred from homology"/>
<sequence length="176" mass="20000">MAKYTEEQLLELKSEAHTPKPEILDAFNKLIEEVKESIEQHQQHQRKWHNGDTYIDEHGHERSYHHINRRRQSKGASGVPRPNLRKKSEPVVDEDGWATLSKPKKGSFAEGDAIEERIKFRETNNSGAGIKARPNNKNLGSSKAVDPREIASDKQTKAFNAFAALGDEDDDDEDDE</sequence>
<reference key="1">
    <citation type="journal article" date="2004" name="Proc. Natl. Acad. Sci. U.S.A.">
        <title>The diploid genome sequence of Candida albicans.</title>
        <authorList>
            <person name="Jones T."/>
            <person name="Federspiel N.A."/>
            <person name="Chibana H."/>
            <person name="Dungan J."/>
            <person name="Kalman S."/>
            <person name="Magee B.B."/>
            <person name="Newport G."/>
            <person name="Thorstenson Y.R."/>
            <person name="Agabian N."/>
            <person name="Magee P.T."/>
            <person name="Davis R.W."/>
            <person name="Scherer S."/>
        </authorList>
    </citation>
    <scope>NUCLEOTIDE SEQUENCE [LARGE SCALE GENOMIC DNA]</scope>
    <source>
        <strain>SC5314 / ATCC MYA-2876</strain>
    </source>
</reference>
<reference key="2">
    <citation type="journal article" date="2007" name="Genome Biol.">
        <title>Assembly of the Candida albicans genome into sixteen supercontigs aligned on the eight chromosomes.</title>
        <authorList>
            <person name="van het Hoog M."/>
            <person name="Rast T.J."/>
            <person name="Martchenko M."/>
            <person name="Grindle S."/>
            <person name="Dignard D."/>
            <person name="Hogues H."/>
            <person name="Cuomo C."/>
            <person name="Berriman M."/>
            <person name="Scherer S."/>
            <person name="Magee B.B."/>
            <person name="Whiteway M."/>
            <person name="Chibana H."/>
            <person name="Nantel A."/>
            <person name="Magee P.T."/>
        </authorList>
    </citation>
    <scope>GENOME REANNOTATION</scope>
    <source>
        <strain>SC5314 / ATCC MYA-2876</strain>
    </source>
</reference>
<reference key="3">
    <citation type="journal article" date="2013" name="Genome Biol.">
        <title>Assembly of a phased diploid Candida albicans genome facilitates allele-specific measurements and provides a simple model for repeat and indel structure.</title>
        <authorList>
            <person name="Muzzey D."/>
            <person name="Schwartz K."/>
            <person name="Weissman J.S."/>
            <person name="Sherlock G."/>
        </authorList>
    </citation>
    <scope>NUCLEOTIDE SEQUENCE [LARGE SCALE GENOMIC DNA]</scope>
    <scope>GENOME REANNOTATION</scope>
    <source>
        <strain>SC5314 / ATCC MYA-2876</strain>
    </source>
</reference>
<protein>
    <recommendedName>
        <fullName>Cap-associated protein CAF20</fullName>
    </recommendedName>
</protein>
<keyword id="KW-0963">Cytoplasm</keyword>
<keyword id="KW-0396">Initiation factor</keyword>
<keyword id="KW-0597">Phosphoprotein</keyword>
<keyword id="KW-0648">Protein biosynthesis</keyword>
<keyword id="KW-0652">Protein synthesis inhibitor</keyword>
<keyword id="KW-1185">Reference proteome</keyword>
<keyword id="KW-0810">Translation regulation</keyword>
<evidence type="ECO:0000250" key="1"/>
<evidence type="ECO:0000256" key="2">
    <source>
        <dbReference type="SAM" id="MobiDB-lite"/>
    </source>
</evidence>
<evidence type="ECO:0000305" key="3"/>
<feature type="chain" id="PRO_0000330084" description="Cap-associated protein CAF20">
    <location>
        <begin position="1"/>
        <end position="176"/>
    </location>
</feature>
<feature type="region of interest" description="Disordered" evidence="2">
    <location>
        <begin position="37"/>
        <end position="155"/>
    </location>
</feature>
<feature type="compositionally biased region" description="Basic and acidic residues" evidence="2">
    <location>
        <begin position="55"/>
        <end position="64"/>
    </location>
</feature>
<feature type="compositionally biased region" description="Basic and acidic residues" evidence="2">
    <location>
        <begin position="145"/>
        <end position="155"/>
    </location>
</feature>
<accession>Q5AQ12</accession>
<accession>A0A1D8PEK1</accession>
<gene>
    <name type="primary">CAF20</name>
    <name type="ordered locus">CAALFM_C109350WA</name>
    <name type="ORF">CaO19.4796</name>
</gene>
<name>CAF20_CANAL</name>